<reference key="1">
    <citation type="submission" date="2005-08" db="EMBL/GenBank/DDBJ databases">
        <title>Complete sequence of Pelodictyon luteolum DSM 273.</title>
        <authorList>
            <consortium name="US DOE Joint Genome Institute"/>
            <person name="Copeland A."/>
            <person name="Lucas S."/>
            <person name="Lapidus A."/>
            <person name="Barry K."/>
            <person name="Detter J.C."/>
            <person name="Glavina T."/>
            <person name="Hammon N."/>
            <person name="Israni S."/>
            <person name="Pitluck S."/>
            <person name="Bryant D."/>
            <person name="Schmutz J."/>
            <person name="Larimer F."/>
            <person name="Land M."/>
            <person name="Kyrpides N."/>
            <person name="Ivanova N."/>
            <person name="Richardson P."/>
        </authorList>
    </citation>
    <scope>NUCLEOTIDE SEQUENCE [LARGE SCALE GENOMIC DNA]</scope>
    <source>
        <strain>DSM 273 / BCRC 81028 / 2530</strain>
    </source>
</reference>
<dbReference type="EMBL" id="CP000096">
    <property type="protein sequence ID" value="ABB24632.1"/>
    <property type="molecule type" value="Genomic_DNA"/>
</dbReference>
<dbReference type="RefSeq" id="WP_011358504.1">
    <property type="nucleotide sequence ID" value="NC_007512.1"/>
</dbReference>
<dbReference type="SMR" id="Q3B1Z9"/>
<dbReference type="STRING" id="319225.Plut_1778"/>
<dbReference type="KEGG" id="plt:Plut_1778"/>
<dbReference type="eggNOG" id="COG0858">
    <property type="taxonomic scope" value="Bacteria"/>
</dbReference>
<dbReference type="HOGENOM" id="CLU_089475_4_0_10"/>
<dbReference type="OrthoDB" id="9811910at2"/>
<dbReference type="Proteomes" id="UP000002709">
    <property type="component" value="Chromosome"/>
</dbReference>
<dbReference type="GO" id="GO:0005829">
    <property type="term" value="C:cytosol"/>
    <property type="evidence" value="ECO:0007669"/>
    <property type="project" value="TreeGrafter"/>
</dbReference>
<dbReference type="GO" id="GO:0043024">
    <property type="term" value="F:ribosomal small subunit binding"/>
    <property type="evidence" value="ECO:0007669"/>
    <property type="project" value="TreeGrafter"/>
</dbReference>
<dbReference type="GO" id="GO:0030490">
    <property type="term" value="P:maturation of SSU-rRNA"/>
    <property type="evidence" value="ECO:0007669"/>
    <property type="project" value="UniProtKB-UniRule"/>
</dbReference>
<dbReference type="Gene3D" id="3.30.300.20">
    <property type="match status" value="1"/>
</dbReference>
<dbReference type="HAMAP" id="MF_00003">
    <property type="entry name" value="RbfA"/>
    <property type="match status" value="1"/>
</dbReference>
<dbReference type="InterPro" id="IPR015946">
    <property type="entry name" value="KH_dom-like_a/b"/>
</dbReference>
<dbReference type="InterPro" id="IPR000238">
    <property type="entry name" value="RbfA"/>
</dbReference>
<dbReference type="InterPro" id="IPR023799">
    <property type="entry name" value="RbfA_dom_sf"/>
</dbReference>
<dbReference type="NCBIfam" id="TIGR00082">
    <property type="entry name" value="rbfA"/>
    <property type="match status" value="1"/>
</dbReference>
<dbReference type="PANTHER" id="PTHR33515">
    <property type="entry name" value="RIBOSOME-BINDING FACTOR A, CHLOROPLASTIC-RELATED"/>
    <property type="match status" value="1"/>
</dbReference>
<dbReference type="PANTHER" id="PTHR33515:SF1">
    <property type="entry name" value="RIBOSOME-BINDING FACTOR A, CHLOROPLASTIC-RELATED"/>
    <property type="match status" value="1"/>
</dbReference>
<dbReference type="Pfam" id="PF02033">
    <property type="entry name" value="RBFA"/>
    <property type="match status" value="1"/>
</dbReference>
<dbReference type="SUPFAM" id="SSF89919">
    <property type="entry name" value="Ribosome-binding factor A, RbfA"/>
    <property type="match status" value="1"/>
</dbReference>
<proteinExistence type="inferred from homology"/>
<name>RBFA_CHLL3</name>
<evidence type="ECO:0000255" key="1">
    <source>
        <dbReference type="HAMAP-Rule" id="MF_00003"/>
    </source>
</evidence>
<sequence>MSRRTEKVASLLQQELGAILEKEYPRGGPLLTVVDVKVTADLGLARAYVSIIGSEEQRTAAMEFLRDETKNIRHILSTRIRHQFRRIPELEFFEDRLFEQANRIEELLRSVRKDDGDNA</sequence>
<gene>
    <name evidence="1" type="primary">rbfA</name>
    <name type="ordered locus">Plut_1778</name>
</gene>
<keyword id="KW-0963">Cytoplasm</keyword>
<keyword id="KW-1185">Reference proteome</keyword>
<keyword id="KW-0690">Ribosome biogenesis</keyword>
<accession>Q3B1Z9</accession>
<comment type="function">
    <text evidence="1">One of several proteins that assist in the late maturation steps of the functional core of the 30S ribosomal subunit. Associates with free 30S ribosomal subunits (but not with 30S subunits that are part of 70S ribosomes or polysomes). Required for efficient processing of 16S rRNA. May interact with the 5'-terminal helix region of 16S rRNA.</text>
</comment>
<comment type="subunit">
    <text evidence="1">Monomer. Binds 30S ribosomal subunits, but not 50S ribosomal subunits or 70S ribosomes.</text>
</comment>
<comment type="subcellular location">
    <subcellularLocation>
        <location evidence="1">Cytoplasm</location>
    </subcellularLocation>
</comment>
<comment type="similarity">
    <text evidence="1">Belongs to the RbfA family.</text>
</comment>
<protein>
    <recommendedName>
        <fullName evidence="1">Ribosome-binding factor A</fullName>
    </recommendedName>
</protein>
<feature type="chain" id="PRO_1000000160" description="Ribosome-binding factor A">
    <location>
        <begin position="1"/>
        <end position="119"/>
    </location>
</feature>
<organism>
    <name type="scientific">Chlorobium luteolum (strain DSM 273 / BCRC 81028 / 2530)</name>
    <name type="common">Pelodictyon luteolum</name>
    <dbReference type="NCBI Taxonomy" id="319225"/>
    <lineage>
        <taxon>Bacteria</taxon>
        <taxon>Pseudomonadati</taxon>
        <taxon>Chlorobiota</taxon>
        <taxon>Chlorobiia</taxon>
        <taxon>Chlorobiales</taxon>
        <taxon>Chlorobiaceae</taxon>
        <taxon>Chlorobium/Pelodictyon group</taxon>
        <taxon>Pelodictyon</taxon>
    </lineage>
</organism>